<sequence>MWKLKIAEGGSPWLRTTNNHVGRQFWEFDPNLGTPEDLAAVEEARKSFSDNRFVQKHSADLLMRLQFSRENLISPVLPQVKIEDTDDVTEEMVETTLKRGLDFYSTIQAHDGHWPGDYGGPMFLLPGLIITLSITGALNTVLSEQHKQEMRRYLYNHQNEDGGWGLHIEGPSTMFGSVLNYVTLRLLGEGPNDGDGDMEKGRDWILNHGGATNITSWGKMWLSVLGAFEWSGNNPLPPEIWLLPYFLPIHPGRMWCHCRMVYLPMSYLYGKRFVGPITSTVLSLRKELFTVPYHEVNWNEARNLCAKEDLYYPHPLVQDILWASLHKIVEPVLMRWPGANLREKAIRTAIEHIHYEDENTRYICIGPVNKVLNMLCCWVEDPNSEAFKLHLPRIHDFLWLAEDGMKMQGYNGSQLWDTGFAIQAILATNLVEEYGPVLEKAHSFVKNSQVLEDCPGDLNYWYRHISKGAWPFSTADHGWPISDCTAEGLKAALLLSKVPKAIVGEPIDAKRLYEAVNVIISLQNADGGLATYELTRSYPWLELINPAETFGDIVIDYPYVECTSAAIQALISFRKLYPGHRKKEVDECIEKAVKFIESIQAADGSWYGSWAVCFTYGTWFGVKGLVAVGKTLKNSPHVAKACEFLLSKQQPSGGWGESYLSCQDKVYSNLDGNRSHVVNTAWAMLALIGAGQAEVDRKPLHRAARYLINAQMENGDFPQQEIMGVFNRNCMITYAAYRNIFPIWALGEYRCQVLLQQGE</sequence>
<comment type="function">
    <text evidence="6 7">Converts oxidosqualene to cycloartenol and 1% parkeol. Involved in plastid biogenesis. Essential for the male gametophyte function.</text>
</comment>
<comment type="catalytic activity">
    <reaction evidence="7">
        <text>(S)-2,3-epoxysqualene = cycloartenol</text>
        <dbReference type="Rhea" id="RHEA:21308"/>
        <dbReference type="ChEBI" id="CHEBI:15441"/>
        <dbReference type="ChEBI" id="CHEBI:17030"/>
        <dbReference type="EC" id="5.4.99.8"/>
    </reaction>
    <physiologicalReaction direction="left-to-right" evidence="7">
        <dbReference type="Rhea" id="RHEA:21309"/>
    </physiologicalReaction>
</comment>
<comment type="tissue specificity">
    <text evidence="5">Expressed in roots, stems, leaves, inflorescences and siliques.</text>
</comment>
<comment type="disruption phenotype">
    <text evidence="6">Albino phenotype leading to lethality.</text>
</comment>
<comment type="similarity">
    <text evidence="10">Belongs to the terpene cyclase/mutase family.</text>
</comment>
<organism>
    <name type="scientific">Arabidopsis thaliana</name>
    <name type="common">Mouse-ear cress</name>
    <dbReference type="NCBI Taxonomy" id="3702"/>
    <lineage>
        <taxon>Eukaryota</taxon>
        <taxon>Viridiplantae</taxon>
        <taxon>Streptophyta</taxon>
        <taxon>Embryophyta</taxon>
        <taxon>Tracheophyta</taxon>
        <taxon>Spermatophyta</taxon>
        <taxon>Magnoliopsida</taxon>
        <taxon>eudicotyledons</taxon>
        <taxon>Gunneridae</taxon>
        <taxon>Pentapetalae</taxon>
        <taxon>rosids</taxon>
        <taxon>malvids</taxon>
        <taxon>Brassicales</taxon>
        <taxon>Brassicaceae</taxon>
        <taxon>Camelineae</taxon>
        <taxon>Arabidopsis</taxon>
    </lineage>
</organism>
<protein>
    <recommendedName>
        <fullName evidence="9">Cycloartenol synthase</fullName>
        <shortName>AtCYC</shortName>
        <ecNumber evidence="7">5.4.99.8</ecNumber>
    </recommendedName>
    <alternativeName>
        <fullName>2,3-epoxysqualene--cycloartenol cyclase</fullName>
    </alternativeName>
</protein>
<evidence type="ECO:0000250" key="1">
    <source>
        <dbReference type="UniProtKB" id="P48449"/>
    </source>
</evidence>
<evidence type="ECO:0000269" key="2">
    <source>
    </source>
</evidence>
<evidence type="ECO:0000269" key="3">
    <source>
    </source>
</evidence>
<evidence type="ECO:0000269" key="4">
    <source>
    </source>
</evidence>
<evidence type="ECO:0000269" key="5">
    <source>
    </source>
</evidence>
<evidence type="ECO:0000269" key="6">
    <source>
    </source>
</evidence>
<evidence type="ECO:0000269" key="7">
    <source>
    </source>
</evidence>
<evidence type="ECO:0000269" key="8">
    <source ref="5"/>
</evidence>
<evidence type="ECO:0000303" key="9">
    <source>
    </source>
</evidence>
<evidence type="ECO:0000305" key="10"/>
<keyword id="KW-0413">Isomerase</keyword>
<keyword id="KW-1185">Reference proteome</keyword>
<keyword id="KW-0677">Repeat</keyword>
<accession>P38605</accession>
<accession>P92967</accession>
<feature type="chain" id="PRO_0000072662" description="Cycloartenol synthase">
    <location>
        <begin position="1"/>
        <end position="759"/>
    </location>
</feature>
<feature type="repeat" description="PFTB 1">
    <location>
        <begin position="147"/>
        <end position="188"/>
    </location>
</feature>
<feature type="repeat" description="PFTB 2">
    <location>
        <begin position="512"/>
        <end position="557"/>
    </location>
</feature>
<feature type="repeat" description="PFTB 3">
    <location>
        <begin position="589"/>
        <end position="629"/>
    </location>
</feature>
<feature type="repeat" description="PFTB 4">
    <location>
        <begin position="638"/>
        <end position="679"/>
    </location>
</feature>
<feature type="repeat" description="PFTB 5">
    <location>
        <begin position="700"/>
        <end position="741"/>
    </location>
</feature>
<feature type="active site" description="Proton donor" evidence="1">
    <location>
        <position position="483"/>
    </location>
</feature>
<feature type="mutagenesis site" description="Produces lanosterol instead of cycloartenol." evidence="2 4 8">
    <original>Y</original>
    <variation>C</variation>
    <location>
        <position position="410"/>
    </location>
</feature>
<feature type="mutagenesis site" description="Produces 65% lanosterol, 2% parkeol and 33% 9beta-delta7-lanosterol instead of cycloartenol. Produces 75% lanosterol, 0.6% parkeol and 24% 9beta-delta7-lanosterol instead of cycloartenol; when associated with V-481. Produces 75% lanosterol and 24% 9beta-delta7-lanosterol instead of cycloartenol; when associated with N-477 or Q-477 and V-481." evidence="2 4 8">
    <original>Y</original>
    <variation>T</variation>
    <location>
        <position position="410"/>
    </location>
</feature>
<feature type="mutagenesis site" description="Produces lanosterol and achilleol A instead of cycloartenol." evidence="2">
    <original>A</original>
    <variation>V</variation>
    <location>
        <position position="469"/>
    </location>
</feature>
<feature type="mutagenesis site" description="Produces 88% lanosterol and 12% parkeol instead of cycloartenol. Produces 75% lanosterol and 24% 9beta-delta7-lanosterol instead of cycloartenol; when associated with T-410 and V-481." evidence="2 3 4">
    <original>H</original>
    <variation>N</variation>
    <location>
        <position position="477"/>
    </location>
</feature>
<feature type="mutagenesis site" description="Produces 22% lanosterol, 73% parkeol and 5% 9beta-delta7-lanosterol instead of cycloartenol. Produces 75% lanosterol and 24% 9beta-delta7-lanosterol instead of cycloartenol; when associated with T-410 and V-481." evidence="2 3 4">
    <original>H</original>
    <variation>Q</variation>
    <location>
        <position position="477"/>
    </location>
</feature>
<feature type="mutagenesis site" description="Produces lanosterol instead of cycloartenol." evidence="2 3 4">
    <original>H</original>
    <variation>Y</variation>
    <location>
        <position position="477"/>
    </location>
</feature>
<feature type="mutagenesis site" description="Produces lanosterol and achilleol A instead of cycloartenol." evidence="2 4 8">
    <original>I</original>
    <variation>T</variation>
    <location>
        <position position="481"/>
    </location>
</feature>
<feature type="mutagenesis site" description="Produces 24% lanosterol, 20% parkeol and 56% cycloartenol. Produces 75% lanosterol, 0.6% parkeol and 24% 9beta-delta7-lanosterol instead of cycloartenol; when associated with T-410." evidence="2 4 8">
    <original>I</original>
    <variation>V</variation>
    <location>
        <position position="481"/>
    </location>
</feature>
<feature type="mutagenesis site" description="Produces lanosterol and achilleol A instead of cycloartenol." evidence="2">
    <original>Y</original>
    <variation>H</variation>
    <location>
        <position position="532"/>
    </location>
</feature>
<feature type="sequence conflict" description="In Ref. 1; AAC04931." evidence="10" ref="1">
    <original>A</original>
    <variation>E</variation>
    <location>
        <position position="501"/>
    </location>
</feature>
<name>CAS1_ARATH</name>
<reference key="1">
    <citation type="journal article" date="1993" name="Proc. Natl. Acad. Sci. U.S.A.">
        <title>Isolation of an Arabidopsis thaliana gene encoding cycloartenol synthase by functional expression in a yeast mutant lacking lanosterol synthase by the use of a chromatographic screen.</title>
        <authorList>
            <person name="Corey E.J."/>
            <person name="Matsuda S.P.T."/>
            <person name="Bartel B."/>
        </authorList>
    </citation>
    <scope>NUCLEOTIDE SEQUENCE [MRNA]</scope>
    <scope>CATALYTIC ACTIVITY</scope>
    <source>
        <strain>cv. Landsberg erecta</strain>
    </source>
</reference>
<reference key="2">
    <citation type="journal article" date="1999" name="Nature">
        <title>Sequence and analysis of chromosome 2 of the plant Arabidopsis thaliana.</title>
        <authorList>
            <person name="Lin X."/>
            <person name="Kaul S."/>
            <person name="Rounsley S.D."/>
            <person name="Shea T.P."/>
            <person name="Benito M.-I."/>
            <person name="Town C.D."/>
            <person name="Fujii C.Y."/>
            <person name="Mason T.M."/>
            <person name="Bowman C.L."/>
            <person name="Barnstead M.E."/>
            <person name="Feldblyum T.V."/>
            <person name="Buell C.R."/>
            <person name="Ketchum K.A."/>
            <person name="Lee J.J."/>
            <person name="Ronning C.M."/>
            <person name="Koo H.L."/>
            <person name="Moffat K.S."/>
            <person name="Cronin L.A."/>
            <person name="Shen M."/>
            <person name="Pai G."/>
            <person name="Van Aken S."/>
            <person name="Umayam L."/>
            <person name="Tallon L.J."/>
            <person name="Gill J.E."/>
            <person name="Adams M.D."/>
            <person name="Carrera A.J."/>
            <person name="Creasy T.H."/>
            <person name="Goodman H.M."/>
            <person name="Somerville C.R."/>
            <person name="Copenhaver G.P."/>
            <person name="Preuss D."/>
            <person name="Nierman W.C."/>
            <person name="White O."/>
            <person name="Eisen J.A."/>
            <person name="Salzberg S.L."/>
            <person name="Fraser C.M."/>
            <person name="Venter J.C."/>
        </authorList>
    </citation>
    <scope>NUCLEOTIDE SEQUENCE [LARGE SCALE GENOMIC DNA]</scope>
    <source>
        <strain>cv. Columbia</strain>
    </source>
</reference>
<reference key="3">
    <citation type="journal article" date="2017" name="Plant J.">
        <title>Araport11: a complete reannotation of the Arabidopsis thaliana reference genome.</title>
        <authorList>
            <person name="Cheng C.Y."/>
            <person name="Krishnakumar V."/>
            <person name="Chan A.P."/>
            <person name="Thibaud-Nissen F."/>
            <person name="Schobel S."/>
            <person name="Town C.D."/>
        </authorList>
    </citation>
    <scope>GENOME REANNOTATION</scope>
    <source>
        <strain>cv. Columbia</strain>
    </source>
</reference>
<reference key="4">
    <citation type="journal article" date="2003" name="Science">
        <title>Empirical analysis of transcriptional activity in the Arabidopsis genome.</title>
        <authorList>
            <person name="Yamada K."/>
            <person name="Lim J."/>
            <person name="Dale J.M."/>
            <person name="Chen H."/>
            <person name="Shinn P."/>
            <person name="Palm C.J."/>
            <person name="Southwick A.M."/>
            <person name="Wu H.C."/>
            <person name="Kim C.J."/>
            <person name="Nguyen M."/>
            <person name="Pham P.K."/>
            <person name="Cheuk R.F."/>
            <person name="Karlin-Newmann G."/>
            <person name="Liu S.X."/>
            <person name="Lam B."/>
            <person name="Sakano H."/>
            <person name="Wu T."/>
            <person name="Yu G."/>
            <person name="Miranda M."/>
            <person name="Quach H.L."/>
            <person name="Tripp M."/>
            <person name="Chang C.H."/>
            <person name="Lee J.M."/>
            <person name="Toriumi M.J."/>
            <person name="Chan M.M."/>
            <person name="Tang C.C."/>
            <person name="Onodera C.S."/>
            <person name="Deng J.M."/>
            <person name="Akiyama K."/>
            <person name="Ansari Y."/>
            <person name="Arakawa T."/>
            <person name="Banh J."/>
            <person name="Banno F."/>
            <person name="Bowser L."/>
            <person name="Brooks S.Y."/>
            <person name="Carninci P."/>
            <person name="Chao Q."/>
            <person name="Choy N."/>
            <person name="Enju A."/>
            <person name="Goldsmith A.D."/>
            <person name="Gurjal M."/>
            <person name="Hansen N.F."/>
            <person name="Hayashizaki Y."/>
            <person name="Johnson-Hopson C."/>
            <person name="Hsuan V.W."/>
            <person name="Iida K."/>
            <person name="Karnes M."/>
            <person name="Khan S."/>
            <person name="Koesema E."/>
            <person name="Ishida J."/>
            <person name="Jiang P.X."/>
            <person name="Jones T."/>
            <person name="Kawai J."/>
            <person name="Kamiya A."/>
            <person name="Meyers C."/>
            <person name="Nakajima M."/>
            <person name="Narusaka M."/>
            <person name="Seki M."/>
            <person name="Sakurai T."/>
            <person name="Satou M."/>
            <person name="Tamse R."/>
            <person name="Vaysberg M."/>
            <person name="Wallender E.K."/>
            <person name="Wong C."/>
            <person name="Yamamura Y."/>
            <person name="Yuan S."/>
            <person name="Shinozaki K."/>
            <person name="Davis R.W."/>
            <person name="Theologis A."/>
            <person name="Ecker J.R."/>
        </authorList>
    </citation>
    <scope>NUCLEOTIDE SEQUENCE [LARGE SCALE MRNA]</scope>
    <source>
        <strain>cv. Columbia</strain>
    </source>
</reference>
<reference key="5">
    <citation type="journal article" date="2000" name="J. Am. Chem. Soc.">
        <title>A tyrosine-to-threonine mutation converts cycloartenol synthase to an oxidosqualene cyclase that forms lanosterol as its major product.</title>
        <authorList>
            <person name="Herrera J.B.R."/>
            <person name="Wilson W.K."/>
            <person name="Matsuda S.P.T."/>
        </authorList>
    </citation>
    <scope>MUTAGENESIS OF TYR-410 AND ILE-481</scope>
</reference>
<reference key="6">
    <citation type="journal article" date="2001" name="Plant Mol. Biol.">
        <title>Molecular cloning and expression in yeast of 2,3-oxidosqualene-triterpenoid cyclases from Arabidopsis thaliana.</title>
        <authorList>
            <person name="Husselstein-Muller T."/>
            <person name="Schaller H."/>
            <person name="Benveniste P."/>
        </authorList>
    </citation>
    <scope>NOMENCLATURE</scope>
</reference>
<reference key="7">
    <citation type="journal article" date="2002" name="Org. Lett.">
        <title>Directed evolution experiments reveal mutations at cycloartenol synthase residue His477 that dramatically alter catalysis.</title>
        <authorList>
            <person name="Segura M.J.R."/>
            <person name="Lodeiro S."/>
            <person name="Meyer M.M."/>
            <person name="Patel A.J."/>
            <person name="Matsuda S.P.T."/>
        </authorList>
    </citation>
    <scope>MUTAGENESIS OF HIS-477</scope>
</reference>
<reference key="8">
    <citation type="journal article" date="2002" name="Biochemistry">
        <title>Conversion of a plant oxidosqualene-cycloartenol synthase to an oxidosqualene-lanosterol cyclase by random mutagenesis.</title>
        <authorList>
            <person name="Wu T.-K."/>
            <person name="Griffin J.H."/>
        </authorList>
    </citation>
    <scope>MUTAGENESIS OF TYR-410; ALA-469; HIS-477; ILE-481 AND TYR-532</scope>
</reference>
<reference key="9">
    <citation type="journal article" date="2004" name="ChemBioChem">
        <title>Oxidosqualene cyclase second-sphere residues profoundly influence the product profile.</title>
        <authorList>
            <person name="Lodeiro S."/>
            <person name="Segura M.J.R."/>
            <person name="Stahl M."/>
            <person name="Schulz-Gasch T."/>
            <person name="Matsuda S.P.T."/>
        </authorList>
    </citation>
    <scope>MUTAGENESIS OF TYR-410; HIS-477 AND ILE-481</scope>
</reference>
<reference key="10">
    <citation type="journal article" date="2006" name="Plant Cell Physiol.">
        <title>Lanosterol synthase in dicotyledonous plants.</title>
        <authorList>
            <person name="Suzuki M."/>
            <person name="Xiang T."/>
            <person name="Ohyama K."/>
            <person name="Seki H."/>
            <person name="Saito K."/>
            <person name="Muranaka T."/>
            <person name="Hayashi H."/>
            <person name="Katsube Y."/>
            <person name="Kushiro T."/>
            <person name="Shibuya M."/>
            <person name="Ebizuka Y."/>
        </authorList>
    </citation>
    <scope>TISSUE SPECIFICITY</scope>
</reference>
<reference key="11">
    <citation type="journal article" date="2008" name="Proc. Natl. Acad. Sci. U.S.A.">
        <title>Allelic mutant series reveal distinct functions for Arabidopsis cycloartenol synthase 1 in cell viability and plastid biogenesis.</title>
        <authorList>
            <person name="Babiychuk E."/>
            <person name="Bouvier-Nave P."/>
            <person name="Compagnon V."/>
            <person name="Suzuki M."/>
            <person name="Muranaka T."/>
            <person name="Van Montagu M."/>
            <person name="Kushnir S."/>
            <person name="Schaller H."/>
        </authorList>
    </citation>
    <scope>FUNCTION</scope>
    <scope>DISRUPTION PHENOTYPE</scope>
</reference>
<proteinExistence type="evidence at protein level"/>
<dbReference type="EC" id="5.4.99.8" evidence="7"/>
<dbReference type="EMBL" id="U02555">
    <property type="protein sequence ID" value="AAC04931.1"/>
    <property type="molecule type" value="mRNA"/>
</dbReference>
<dbReference type="EMBL" id="AC005171">
    <property type="protein sequence ID" value="AAM15015.1"/>
    <property type="molecule type" value="Genomic_DNA"/>
</dbReference>
<dbReference type="EMBL" id="CP002685">
    <property type="protein sequence ID" value="AEC06032.1"/>
    <property type="molecule type" value="Genomic_DNA"/>
</dbReference>
<dbReference type="EMBL" id="AY094394">
    <property type="protein sequence ID" value="AAM19773.1"/>
    <property type="molecule type" value="mRNA"/>
</dbReference>
<dbReference type="EMBL" id="BT001118">
    <property type="protein sequence ID" value="AAN64509.1"/>
    <property type="molecule type" value="mRNA"/>
</dbReference>
<dbReference type="PIR" id="A49398">
    <property type="entry name" value="A49398"/>
</dbReference>
<dbReference type="PIR" id="H84481">
    <property type="entry name" value="H84481"/>
</dbReference>
<dbReference type="RefSeq" id="NP_178722.1">
    <property type="nucleotide sequence ID" value="NM_126681.3"/>
</dbReference>
<dbReference type="SMR" id="P38605"/>
<dbReference type="FunCoup" id="P38605">
    <property type="interactions" value="2106"/>
</dbReference>
<dbReference type="IntAct" id="P38605">
    <property type="interactions" value="2"/>
</dbReference>
<dbReference type="STRING" id="3702.P38605"/>
<dbReference type="BindingDB" id="P38605"/>
<dbReference type="ChEMBL" id="CHEMBL5356"/>
<dbReference type="iPTMnet" id="P38605"/>
<dbReference type="PaxDb" id="3702-AT2G07050.1"/>
<dbReference type="ProteomicsDB" id="223909"/>
<dbReference type="EnsemblPlants" id="AT2G07050.1">
    <property type="protein sequence ID" value="AT2G07050.1"/>
    <property type="gene ID" value="AT2G07050"/>
</dbReference>
<dbReference type="GeneID" id="815275"/>
<dbReference type="Gramene" id="AT2G07050.1">
    <property type="protein sequence ID" value="AT2G07050.1"/>
    <property type="gene ID" value="AT2G07050"/>
</dbReference>
<dbReference type="KEGG" id="ath:AT2G07050"/>
<dbReference type="Araport" id="AT2G07050"/>
<dbReference type="TAIR" id="AT2G07050">
    <property type="gene designation" value="CAS1"/>
</dbReference>
<dbReference type="eggNOG" id="KOG0497">
    <property type="taxonomic scope" value="Eukaryota"/>
</dbReference>
<dbReference type="HOGENOM" id="CLU_009074_2_0_1"/>
<dbReference type="InParanoid" id="P38605"/>
<dbReference type="PhylomeDB" id="P38605"/>
<dbReference type="BioCyc" id="ARA:AT2G07050-MONOMER"/>
<dbReference type="BioCyc" id="MetaCyc:AT2G07050-MONOMER"/>
<dbReference type="BRENDA" id="5.4.99.8">
    <property type="organism ID" value="399"/>
</dbReference>
<dbReference type="PRO" id="PR:P38605"/>
<dbReference type="Proteomes" id="UP000006548">
    <property type="component" value="Chromosome 2"/>
</dbReference>
<dbReference type="ExpressionAtlas" id="P38605">
    <property type="expression patterns" value="baseline and differential"/>
</dbReference>
<dbReference type="GO" id="GO:0005811">
    <property type="term" value="C:lipid droplet"/>
    <property type="evidence" value="ECO:0007669"/>
    <property type="project" value="InterPro"/>
</dbReference>
<dbReference type="GO" id="GO:0005739">
    <property type="term" value="C:mitochondrion"/>
    <property type="evidence" value="ECO:0007005"/>
    <property type="project" value="TAIR"/>
</dbReference>
<dbReference type="GO" id="GO:0000325">
    <property type="term" value="C:plant-type vacuole"/>
    <property type="evidence" value="ECO:0007005"/>
    <property type="project" value="TAIR"/>
</dbReference>
<dbReference type="GO" id="GO:0005773">
    <property type="term" value="C:vacuole"/>
    <property type="evidence" value="ECO:0007005"/>
    <property type="project" value="TAIR"/>
</dbReference>
<dbReference type="GO" id="GO:0016871">
    <property type="term" value="F:cycloartenol synthase activity"/>
    <property type="evidence" value="ECO:0000314"/>
    <property type="project" value="TAIR"/>
</dbReference>
<dbReference type="GO" id="GO:0019745">
    <property type="term" value="P:pentacyclic triterpenoid biosynthetic process"/>
    <property type="evidence" value="ECO:0000314"/>
    <property type="project" value="TAIR"/>
</dbReference>
<dbReference type="GO" id="GO:0009555">
    <property type="term" value="P:pollen development"/>
    <property type="evidence" value="ECO:0000315"/>
    <property type="project" value="TAIR"/>
</dbReference>
<dbReference type="GO" id="GO:0010027">
    <property type="term" value="P:thylakoid membrane organization"/>
    <property type="evidence" value="ECO:0000315"/>
    <property type="project" value="TAIR"/>
</dbReference>
<dbReference type="CDD" id="cd02892">
    <property type="entry name" value="SQCY_1"/>
    <property type="match status" value="1"/>
</dbReference>
<dbReference type="FunFam" id="1.50.10.20:FF:000002">
    <property type="entry name" value="Terpene cyclase/mutase family member"/>
    <property type="match status" value="1"/>
</dbReference>
<dbReference type="FunFam" id="1.50.10.20:FF:000022">
    <property type="entry name" value="Terpene cyclase/mutase family member"/>
    <property type="match status" value="1"/>
</dbReference>
<dbReference type="Gene3D" id="1.50.10.20">
    <property type="match status" value="3"/>
</dbReference>
<dbReference type="InterPro" id="IPR032696">
    <property type="entry name" value="SQ_cyclase_C"/>
</dbReference>
<dbReference type="InterPro" id="IPR032697">
    <property type="entry name" value="SQ_cyclase_N"/>
</dbReference>
<dbReference type="InterPro" id="IPR018333">
    <property type="entry name" value="Squalene_cyclase"/>
</dbReference>
<dbReference type="InterPro" id="IPR002365">
    <property type="entry name" value="Terpene_synthase_CS"/>
</dbReference>
<dbReference type="InterPro" id="IPR008930">
    <property type="entry name" value="Terpenoid_cyclase/PrenylTrfase"/>
</dbReference>
<dbReference type="NCBIfam" id="TIGR01787">
    <property type="entry name" value="squalene_cyclas"/>
    <property type="match status" value="1"/>
</dbReference>
<dbReference type="PANTHER" id="PTHR11764:SF20">
    <property type="entry name" value="LANOSTEROL SYNTHASE"/>
    <property type="match status" value="1"/>
</dbReference>
<dbReference type="PANTHER" id="PTHR11764">
    <property type="entry name" value="TERPENE CYCLASE/MUTASE FAMILY MEMBER"/>
    <property type="match status" value="1"/>
</dbReference>
<dbReference type="Pfam" id="PF13243">
    <property type="entry name" value="SQHop_cyclase_C"/>
    <property type="match status" value="1"/>
</dbReference>
<dbReference type="Pfam" id="PF13249">
    <property type="entry name" value="SQHop_cyclase_N"/>
    <property type="match status" value="1"/>
</dbReference>
<dbReference type="SFLD" id="SFLDG01016">
    <property type="entry name" value="Prenyltransferase_Like_2"/>
    <property type="match status" value="1"/>
</dbReference>
<dbReference type="SUPFAM" id="SSF48239">
    <property type="entry name" value="Terpenoid cyclases/Protein prenyltransferases"/>
    <property type="match status" value="2"/>
</dbReference>
<dbReference type="PROSITE" id="PS01074">
    <property type="entry name" value="TERPENE_SYNTHASES"/>
    <property type="match status" value="1"/>
</dbReference>
<gene>
    <name type="primary">CAS1</name>
    <name type="synonym">CYC</name>
    <name type="ordered locus">At2g07050</name>
    <name type="ORF">T4E14.16</name>
</gene>